<dbReference type="EC" id="3.1.1.-"/>
<dbReference type="EMBL" id="AP003824">
    <property type="protein sequence ID" value="BAC19963.1"/>
    <property type="molecule type" value="Genomic_DNA"/>
</dbReference>
<dbReference type="EMBL" id="AP008213">
    <property type="protein sequence ID" value="BAF20795.2"/>
    <property type="molecule type" value="Genomic_DNA"/>
</dbReference>
<dbReference type="EMBL" id="AP014963">
    <property type="status" value="NOT_ANNOTATED_CDS"/>
    <property type="molecule type" value="Genomic_DNA"/>
</dbReference>
<dbReference type="RefSeq" id="XP_015646372.1">
    <property type="nucleotide sequence ID" value="XM_015790886.1"/>
</dbReference>
<dbReference type="SMR" id="Q8H5D4"/>
<dbReference type="STRING" id="39947.Q8H5D4"/>
<dbReference type="PaxDb" id="39947-Q8H5D4"/>
<dbReference type="KEGG" id="dosa:Os07g0144500"/>
<dbReference type="eggNOG" id="KOG0513">
    <property type="taxonomic scope" value="Eukaryota"/>
</dbReference>
<dbReference type="InParanoid" id="Q8H5D4"/>
<dbReference type="OrthoDB" id="630895at2759"/>
<dbReference type="Proteomes" id="UP000000763">
    <property type="component" value="Chromosome 7"/>
</dbReference>
<dbReference type="Proteomes" id="UP000059680">
    <property type="component" value="Chromosome 7"/>
</dbReference>
<dbReference type="GO" id="GO:0016787">
    <property type="term" value="F:hydrolase activity"/>
    <property type="evidence" value="ECO:0007669"/>
    <property type="project" value="UniProtKB-KW"/>
</dbReference>
<dbReference type="GO" id="GO:0006952">
    <property type="term" value="P:defense response"/>
    <property type="evidence" value="ECO:0007669"/>
    <property type="project" value="UniProtKB-KW"/>
</dbReference>
<dbReference type="GO" id="GO:0016042">
    <property type="term" value="P:lipid catabolic process"/>
    <property type="evidence" value="ECO:0007669"/>
    <property type="project" value="UniProtKB-KW"/>
</dbReference>
<dbReference type="CDD" id="cd07199">
    <property type="entry name" value="Pat17_PNPLA8_PNPLA9_like"/>
    <property type="match status" value="1"/>
</dbReference>
<dbReference type="Gene3D" id="3.40.1090.10">
    <property type="entry name" value="Cytosolic phospholipase A2 catalytic domain"/>
    <property type="match status" value="1"/>
</dbReference>
<dbReference type="InterPro" id="IPR016035">
    <property type="entry name" value="Acyl_Trfase/lysoPLipase"/>
</dbReference>
<dbReference type="InterPro" id="IPR002641">
    <property type="entry name" value="PNPLA_dom"/>
</dbReference>
<dbReference type="PANTHER" id="PTHR32241:SF8">
    <property type="entry name" value="PATATIN-LIKE PROTEIN 3"/>
    <property type="match status" value="1"/>
</dbReference>
<dbReference type="PANTHER" id="PTHR32241">
    <property type="entry name" value="PATATIN-LIKE PROTEIN 6"/>
    <property type="match status" value="1"/>
</dbReference>
<dbReference type="Pfam" id="PF01734">
    <property type="entry name" value="Patatin"/>
    <property type="match status" value="1"/>
</dbReference>
<dbReference type="SUPFAM" id="SSF52151">
    <property type="entry name" value="FabD/lysophospholipase-like"/>
    <property type="match status" value="1"/>
</dbReference>
<dbReference type="PROSITE" id="PS51635">
    <property type="entry name" value="PNPLA"/>
    <property type="match status" value="1"/>
</dbReference>
<keyword id="KW-0378">Hydrolase</keyword>
<keyword id="KW-0442">Lipid degradation</keyword>
<keyword id="KW-0443">Lipid metabolism</keyword>
<keyword id="KW-0611">Plant defense</keyword>
<keyword id="KW-1185">Reference proteome</keyword>
<accession>Q8H5D4</accession>
<accession>Q0D8M8</accession>
<comment type="function">
    <text evidence="1">Possesses non-specific lipolytic acyl hydrolase (LAH) activity. Hydrolyzes phospholipids as well as galactolipids. May play a role in disease resistance (By similarity).</text>
</comment>
<comment type="domain">
    <text evidence="1">The nitrogen atoms of the two glycine residues in the GGXR motif define the oxyanion hole, and stabilize the oxyanion that forms during the nucleophilic attack by the catalytic serine during substrate cleavage.</text>
</comment>
<comment type="similarity">
    <text evidence="5">Belongs to the patatin family.</text>
</comment>
<comment type="caution">
    <text evidence="5">Lacks the conserved Asp residue expected to act as the active site proton acceptor.</text>
</comment>
<sequence>MEAGQDDAADRLTYEIFSILESKFLFGYGGGGGGETKSLQCAPPVSRGNRVCVLSVDGGARPEDGLLAAAALVRLEAAVQRRAGSKAARLADFFDVAAGSGAGGVLAAMLFARGPCGRPMYSADDALGFLLRRVRRRGWSSRAGGLLRRPAGAFHKVFGELTLRDTVRPVLVPCYDLATRAPFLFSRADAAQSPAYDFRLRDACAATCAPSGGGAAVEASSVDGVTRITAVGSGVALGNPTAAAITHVLNNRREFPAAAGVDNLLVISIGTGEAAGSSSRHRARTPVIARIAAEGASDMVDQAVAMAFGQHRTSNYVRIQGMGVARRRGGGVACGGETAEKAVWVAEAMLQQRNVEAVMFQGRRLAGETNAEKVERFARELIKEHGRRKQHVPPAASGGGGGGLDCHVSKKQP</sequence>
<gene>
    <name type="primary">PLP3</name>
    <name type="ordered locus">Os07g0144500</name>
    <name type="ordered locus">LOC_Os07g05110</name>
    <name type="ORF">OJ1343_B12.121</name>
</gene>
<name>PLP3_ORYSJ</name>
<reference key="1">
    <citation type="journal article" date="2005" name="Nature">
        <title>The map-based sequence of the rice genome.</title>
        <authorList>
            <consortium name="International rice genome sequencing project (IRGSP)"/>
        </authorList>
    </citation>
    <scope>NUCLEOTIDE SEQUENCE [LARGE SCALE GENOMIC DNA]</scope>
    <source>
        <strain>cv. Nipponbare</strain>
    </source>
</reference>
<reference key="2">
    <citation type="journal article" date="2008" name="Nucleic Acids Res.">
        <title>The rice annotation project database (RAP-DB): 2008 update.</title>
        <authorList>
            <consortium name="The rice annotation project (RAP)"/>
        </authorList>
    </citation>
    <scope>GENOME REANNOTATION</scope>
    <source>
        <strain>cv. Nipponbare</strain>
    </source>
</reference>
<reference key="3">
    <citation type="journal article" date="2013" name="Rice">
        <title>Improvement of the Oryza sativa Nipponbare reference genome using next generation sequence and optical map data.</title>
        <authorList>
            <person name="Kawahara Y."/>
            <person name="de la Bastide M."/>
            <person name="Hamilton J.P."/>
            <person name="Kanamori H."/>
            <person name="McCombie W.R."/>
            <person name="Ouyang S."/>
            <person name="Schwartz D.C."/>
            <person name="Tanaka T."/>
            <person name="Wu J."/>
            <person name="Zhou S."/>
            <person name="Childs K.L."/>
            <person name="Davidson R.M."/>
            <person name="Lin H."/>
            <person name="Quesada-Ocampo L."/>
            <person name="Vaillancourt B."/>
            <person name="Sakai H."/>
            <person name="Lee S.S."/>
            <person name="Kim J."/>
            <person name="Numa H."/>
            <person name="Itoh T."/>
            <person name="Buell C.R."/>
            <person name="Matsumoto T."/>
        </authorList>
    </citation>
    <scope>GENOME REANNOTATION</scope>
    <source>
        <strain>cv. Nipponbare</strain>
    </source>
</reference>
<evidence type="ECO:0000250" key="1"/>
<evidence type="ECO:0000255" key="2"/>
<evidence type="ECO:0000255" key="3">
    <source>
        <dbReference type="PROSITE-ProRule" id="PRU01161"/>
    </source>
</evidence>
<evidence type="ECO:0000256" key="4">
    <source>
        <dbReference type="SAM" id="MobiDB-lite"/>
    </source>
</evidence>
<evidence type="ECO:0000305" key="5"/>
<feature type="chain" id="PRO_0000425824" description="Patatin-like protein 3">
    <location>
        <begin position="1"/>
        <end position="413"/>
    </location>
</feature>
<feature type="domain" description="PNPLA" evidence="3">
    <location>
        <begin position="54"/>
        <end position="245"/>
    </location>
</feature>
<feature type="region of interest" description="Disordered" evidence="4">
    <location>
        <begin position="384"/>
        <end position="413"/>
    </location>
</feature>
<feature type="short sequence motif" description="GGXR">
    <location>
        <begin position="58"/>
        <end position="61"/>
    </location>
</feature>
<feature type="active site" description="Nucleophile" evidence="2">
    <location>
        <position position="100"/>
    </location>
</feature>
<organism>
    <name type="scientific">Oryza sativa subsp. japonica</name>
    <name type="common">Rice</name>
    <dbReference type="NCBI Taxonomy" id="39947"/>
    <lineage>
        <taxon>Eukaryota</taxon>
        <taxon>Viridiplantae</taxon>
        <taxon>Streptophyta</taxon>
        <taxon>Embryophyta</taxon>
        <taxon>Tracheophyta</taxon>
        <taxon>Spermatophyta</taxon>
        <taxon>Magnoliopsida</taxon>
        <taxon>Liliopsida</taxon>
        <taxon>Poales</taxon>
        <taxon>Poaceae</taxon>
        <taxon>BOP clade</taxon>
        <taxon>Oryzoideae</taxon>
        <taxon>Oryzeae</taxon>
        <taxon>Oryzinae</taxon>
        <taxon>Oryza</taxon>
        <taxon>Oryza sativa</taxon>
    </lineage>
</organism>
<proteinExistence type="inferred from homology"/>
<protein>
    <recommendedName>
        <fullName>Patatin-like protein 3</fullName>
        <shortName>OsPLP3</shortName>
        <ecNumber>3.1.1.-</ecNumber>
    </recommendedName>
</protein>